<dbReference type="EC" id="2.6.1.52" evidence="1"/>
<dbReference type="EMBL" id="AE015451">
    <property type="protein sequence ID" value="AAN67388.1"/>
    <property type="molecule type" value="Genomic_DNA"/>
</dbReference>
<dbReference type="RefSeq" id="NP_743924.1">
    <property type="nucleotide sequence ID" value="NC_002947.4"/>
</dbReference>
<dbReference type="RefSeq" id="WP_010952806.1">
    <property type="nucleotide sequence ID" value="NZ_CP169744.1"/>
</dbReference>
<dbReference type="SMR" id="Q88M07"/>
<dbReference type="STRING" id="160488.PP_1768"/>
<dbReference type="PaxDb" id="160488-PP_1768"/>
<dbReference type="GeneID" id="83681698"/>
<dbReference type="KEGG" id="ppu:PP_1768"/>
<dbReference type="PATRIC" id="fig|160488.4.peg.1864"/>
<dbReference type="eggNOG" id="COG1932">
    <property type="taxonomic scope" value="Bacteria"/>
</dbReference>
<dbReference type="HOGENOM" id="CLU_034866_0_2_6"/>
<dbReference type="OrthoDB" id="9809412at2"/>
<dbReference type="PhylomeDB" id="Q88M07"/>
<dbReference type="BioCyc" id="PPUT160488:G1G01-1870-MONOMER"/>
<dbReference type="UniPathway" id="UPA00135">
    <property type="reaction ID" value="UER00197"/>
</dbReference>
<dbReference type="UniPathway" id="UPA00244">
    <property type="reaction ID" value="UER00311"/>
</dbReference>
<dbReference type="Proteomes" id="UP000000556">
    <property type="component" value="Chromosome"/>
</dbReference>
<dbReference type="GO" id="GO:0005737">
    <property type="term" value="C:cytoplasm"/>
    <property type="evidence" value="ECO:0007669"/>
    <property type="project" value="UniProtKB-SubCell"/>
</dbReference>
<dbReference type="GO" id="GO:0004648">
    <property type="term" value="F:O-phospho-L-serine:2-oxoglutarate aminotransferase activity"/>
    <property type="evidence" value="ECO:0007669"/>
    <property type="project" value="UniProtKB-UniRule"/>
</dbReference>
<dbReference type="GO" id="GO:0030170">
    <property type="term" value="F:pyridoxal phosphate binding"/>
    <property type="evidence" value="ECO:0007669"/>
    <property type="project" value="UniProtKB-UniRule"/>
</dbReference>
<dbReference type="GO" id="GO:0006564">
    <property type="term" value="P:L-serine biosynthetic process"/>
    <property type="evidence" value="ECO:0007669"/>
    <property type="project" value="UniProtKB-UniRule"/>
</dbReference>
<dbReference type="GO" id="GO:0008615">
    <property type="term" value="P:pyridoxine biosynthetic process"/>
    <property type="evidence" value="ECO:0007669"/>
    <property type="project" value="UniProtKB-UniRule"/>
</dbReference>
<dbReference type="CDD" id="cd00611">
    <property type="entry name" value="PSAT_like"/>
    <property type="match status" value="1"/>
</dbReference>
<dbReference type="FunFam" id="3.40.640.10:FF:000010">
    <property type="entry name" value="Phosphoserine aminotransferase"/>
    <property type="match status" value="1"/>
</dbReference>
<dbReference type="FunFam" id="3.90.1150.10:FF:000006">
    <property type="entry name" value="Phosphoserine aminotransferase"/>
    <property type="match status" value="1"/>
</dbReference>
<dbReference type="Gene3D" id="3.90.1150.10">
    <property type="entry name" value="Aspartate Aminotransferase, domain 1"/>
    <property type="match status" value="1"/>
</dbReference>
<dbReference type="Gene3D" id="3.40.640.10">
    <property type="entry name" value="Type I PLP-dependent aspartate aminotransferase-like (Major domain)"/>
    <property type="match status" value="1"/>
</dbReference>
<dbReference type="HAMAP" id="MF_00160">
    <property type="entry name" value="SerC_aminotrans_5"/>
    <property type="match status" value="1"/>
</dbReference>
<dbReference type="InterPro" id="IPR000192">
    <property type="entry name" value="Aminotrans_V_dom"/>
</dbReference>
<dbReference type="InterPro" id="IPR022278">
    <property type="entry name" value="Pser_aminoTfrase"/>
</dbReference>
<dbReference type="InterPro" id="IPR015424">
    <property type="entry name" value="PyrdxlP-dep_Trfase"/>
</dbReference>
<dbReference type="InterPro" id="IPR015421">
    <property type="entry name" value="PyrdxlP-dep_Trfase_major"/>
</dbReference>
<dbReference type="InterPro" id="IPR015422">
    <property type="entry name" value="PyrdxlP-dep_Trfase_small"/>
</dbReference>
<dbReference type="NCBIfam" id="NF003764">
    <property type="entry name" value="PRK05355.1"/>
    <property type="match status" value="1"/>
</dbReference>
<dbReference type="NCBIfam" id="TIGR01364">
    <property type="entry name" value="serC_1"/>
    <property type="match status" value="1"/>
</dbReference>
<dbReference type="PANTHER" id="PTHR43247">
    <property type="entry name" value="PHOSPHOSERINE AMINOTRANSFERASE"/>
    <property type="match status" value="1"/>
</dbReference>
<dbReference type="PANTHER" id="PTHR43247:SF1">
    <property type="entry name" value="PHOSPHOSERINE AMINOTRANSFERASE"/>
    <property type="match status" value="1"/>
</dbReference>
<dbReference type="Pfam" id="PF00266">
    <property type="entry name" value="Aminotran_5"/>
    <property type="match status" value="1"/>
</dbReference>
<dbReference type="PIRSF" id="PIRSF000525">
    <property type="entry name" value="SerC"/>
    <property type="match status" value="1"/>
</dbReference>
<dbReference type="SUPFAM" id="SSF53383">
    <property type="entry name" value="PLP-dependent transferases"/>
    <property type="match status" value="1"/>
</dbReference>
<comment type="function">
    <text evidence="1">Catalyzes the reversible conversion of 3-phosphohydroxypyruvate to phosphoserine and of 3-hydroxy-2-oxo-4-phosphonooxybutanoate to phosphohydroxythreonine.</text>
</comment>
<comment type="catalytic activity">
    <reaction evidence="1">
        <text>O-phospho-L-serine + 2-oxoglutarate = 3-phosphooxypyruvate + L-glutamate</text>
        <dbReference type="Rhea" id="RHEA:14329"/>
        <dbReference type="ChEBI" id="CHEBI:16810"/>
        <dbReference type="ChEBI" id="CHEBI:18110"/>
        <dbReference type="ChEBI" id="CHEBI:29985"/>
        <dbReference type="ChEBI" id="CHEBI:57524"/>
        <dbReference type="EC" id="2.6.1.52"/>
    </reaction>
</comment>
<comment type="catalytic activity">
    <reaction evidence="1">
        <text>4-(phosphooxy)-L-threonine + 2-oxoglutarate = (R)-3-hydroxy-2-oxo-4-phosphooxybutanoate + L-glutamate</text>
        <dbReference type="Rhea" id="RHEA:16573"/>
        <dbReference type="ChEBI" id="CHEBI:16810"/>
        <dbReference type="ChEBI" id="CHEBI:29985"/>
        <dbReference type="ChEBI" id="CHEBI:58452"/>
        <dbReference type="ChEBI" id="CHEBI:58538"/>
        <dbReference type="EC" id="2.6.1.52"/>
    </reaction>
</comment>
<comment type="cofactor">
    <cofactor evidence="1">
        <name>pyridoxal 5'-phosphate</name>
        <dbReference type="ChEBI" id="CHEBI:597326"/>
    </cofactor>
    <text evidence="1">Binds 1 pyridoxal phosphate per subunit.</text>
</comment>
<comment type="pathway">
    <text evidence="1">Amino-acid biosynthesis; L-serine biosynthesis; L-serine from 3-phospho-D-glycerate: step 2/3.</text>
</comment>
<comment type="pathway">
    <text evidence="1">Cofactor biosynthesis; pyridoxine 5'-phosphate biosynthesis; pyridoxine 5'-phosphate from D-erythrose 4-phosphate: step 3/5.</text>
</comment>
<comment type="subunit">
    <text evidence="1">Homodimer.</text>
</comment>
<comment type="subcellular location">
    <subcellularLocation>
        <location evidence="1">Cytoplasm</location>
    </subcellularLocation>
</comment>
<comment type="similarity">
    <text evidence="1">Belongs to the class-V pyridoxal-phosphate-dependent aminotransferase family. SerC subfamily.</text>
</comment>
<sequence>MSKRAFNFCAGPAALPDAVLQRAQAEMLDWRGKGLSVMEMSHRSDDYVAIAEKAEQDLRDLLSVPSNYKVLFLQGGASQQFAEIPLNLLPENGTADYIETGIWSKKAIEEARRFGNVNVAATAKPYDYLAIPGQNEWNLTKNAAYVHYASNETIGGLQFDWVPQTGDVPLVVDMSSDILSRPIDVSQFGLIYAGAQKNIGPSGLVVVIVREDLLGHARSSCPTMLDYKVSADNGSMYNTPATYSWYLSGLVFEWLKEQGGVEAMEQRNRAKKDRLYGFIDRSEFYTNPISVNARSWMNVPFRLADERLDKAFLAGADARGLLNLKGHRSVGGMRASIYNALGLEAVEALVGYMAEFEKEHG</sequence>
<protein>
    <recommendedName>
        <fullName evidence="1">Phosphoserine aminotransferase</fullName>
        <ecNumber evidence="1">2.6.1.52</ecNumber>
    </recommendedName>
    <alternativeName>
        <fullName evidence="1">Phosphohydroxythreonine aminotransferase</fullName>
        <shortName evidence="1">PSAT</shortName>
    </alternativeName>
</protein>
<feature type="chain" id="PRO_0000150199" description="Phosphoserine aminotransferase">
    <location>
        <begin position="1"/>
        <end position="361"/>
    </location>
</feature>
<feature type="binding site" evidence="1">
    <location>
        <position position="43"/>
    </location>
    <ligand>
        <name>L-glutamate</name>
        <dbReference type="ChEBI" id="CHEBI:29985"/>
    </ligand>
</feature>
<feature type="binding site" evidence="1">
    <location>
        <begin position="77"/>
        <end position="78"/>
    </location>
    <ligand>
        <name>pyridoxal 5'-phosphate</name>
        <dbReference type="ChEBI" id="CHEBI:597326"/>
    </ligand>
</feature>
<feature type="binding site" evidence="1">
    <location>
        <position position="103"/>
    </location>
    <ligand>
        <name>pyridoxal 5'-phosphate</name>
        <dbReference type="ChEBI" id="CHEBI:597326"/>
    </ligand>
</feature>
<feature type="binding site" evidence="1">
    <location>
        <position position="153"/>
    </location>
    <ligand>
        <name>pyridoxal 5'-phosphate</name>
        <dbReference type="ChEBI" id="CHEBI:597326"/>
    </ligand>
</feature>
<feature type="binding site" evidence="1">
    <location>
        <position position="173"/>
    </location>
    <ligand>
        <name>pyridoxal 5'-phosphate</name>
        <dbReference type="ChEBI" id="CHEBI:597326"/>
    </ligand>
</feature>
<feature type="binding site" evidence="1">
    <location>
        <position position="196"/>
    </location>
    <ligand>
        <name>pyridoxal 5'-phosphate</name>
        <dbReference type="ChEBI" id="CHEBI:597326"/>
    </ligand>
</feature>
<feature type="binding site" evidence="1">
    <location>
        <begin position="238"/>
        <end position="239"/>
    </location>
    <ligand>
        <name>pyridoxal 5'-phosphate</name>
        <dbReference type="ChEBI" id="CHEBI:597326"/>
    </ligand>
</feature>
<feature type="modified residue" description="N6-(pyridoxal phosphate)lysine" evidence="1">
    <location>
        <position position="197"/>
    </location>
</feature>
<accession>Q88M07</accession>
<gene>
    <name evidence="1" type="primary">serC</name>
    <name type="ordered locus">PP_1768</name>
</gene>
<reference key="1">
    <citation type="journal article" date="2002" name="Environ. Microbiol.">
        <title>Complete genome sequence and comparative analysis of the metabolically versatile Pseudomonas putida KT2440.</title>
        <authorList>
            <person name="Nelson K.E."/>
            <person name="Weinel C."/>
            <person name="Paulsen I.T."/>
            <person name="Dodson R.J."/>
            <person name="Hilbert H."/>
            <person name="Martins dos Santos V.A.P."/>
            <person name="Fouts D.E."/>
            <person name="Gill S.R."/>
            <person name="Pop M."/>
            <person name="Holmes M."/>
            <person name="Brinkac L.M."/>
            <person name="Beanan M.J."/>
            <person name="DeBoy R.T."/>
            <person name="Daugherty S.C."/>
            <person name="Kolonay J.F."/>
            <person name="Madupu R."/>
            <person name="Nelson W.C."/>
            <person name="White O."/>
            <person name="Peterson J.D."/>
            <person name="Khouri H.M."/>
            <person name="Hance I."/>
            <person name="Chris Lee P."/>
            <person name="Holtzapple E.K."/>
            <person name="Scanlan D."/>
            <person name="Tran K."/>
            <person name="Moazzez A."/>
            <person name="Utterback T.R."/>
            <person name="Rizzo M."/>
            <person name="Lee K."/>
            <person name="Kosack D."/>
            <person name="Moestl D."/>
            <person name="Wedler H."/>
            <person name="Lauber J."/>
            <person name="Stjepandic D."/>
            <person name="Hoheisel J."/>
            <person name="Straetz M."/>
            <person name="Heim S."/>
            <person name="Kiewitz C."/>
            <person name="Eisen J.A."/>
            <person name="Timmis K.N."/>
            <person name="Duesterhoeft A."/>
            <person name="Tuemmler B."/>
            <person name="Fraser C.M."/>
        </authorList>
    </citation>
    <scope>NUCLEOTIDE SEQUENCE [LARGE SCALE GENOMIC DNA]</scope>
    <source>
        <strain>ATCC 47054 / DSM 6125 / CFBP 8728 / NCIMB 11950 / KT2440</strain>
    </source>
</reference>
<organism>
    <name type="scientific">Pseudomonas putida (strain ATCC 47054 / DSM 6125 / CFBP 8728 / NCIMB 11950 / KT2440)</name>
    <dbReference type="NCBI Taxonomy" id="160488"/>
    <lineage>
        <taxon>Bacteria</taxon>
        <taxon>Pseudomonadati</taxon>
        <taxon>Pseudomonadota</taxon>
        <taxon>Gammaproteobacteria</taxon>
        <taxon>Pseudomonadales</taxon>
        <taxon>Pseudomonadaceae</taxon>
        <taxon>Pseudomonas</taxon>
    </lineage>
</organism>
<name>SERC_PSEPK</name>
<proteinExistence type="inferred from homology"/>
<keyword id="KW-0028">Amino-acid biosynthesis</keyword>
<keyword id="KW-0032">Aminotransferase</keyword>
<keyword id="KW-0963">Cytoplasm</keyword>
<keyword id="KW-0663">Pyridoxal phosphate</keyword>
<keyword id="KW-0664">Pyridoxine biosynthesis</keyword>
<keyword id="KW-1185">Reference proteome</keyword>
<keyword id="KW-0718">Serine biosynthesis</keyword>
<keyword id="KW-0808">Transferase</keyword>
<evidence type="ECO:0000255" key="1">
    <source>
        <dbReference type="HAMAP-Rule" id="MF_00160"/>
    </source>
</evidence>